<proteinExistence type="inferred from homology"/>
<keyword id="KW-0149">Chlorophyll biosynthesis</keyword>
<keyword id="KW-0627">Porphyrin biosynthesis</keyword>
<keyword id="KW-0808">Transferase</keyword>
<comment type="function">
    <text evidence="1">Tetrapolymerization of the monopyrrole PBG into the hydroxymethylbilane pre-uroporphyrinogen in several discrete steps.</text>
</comment>
<comment type="catalytic activity">
    <reaction evidence="1">
        <text>4 porphobilinogen + H2O = hydroxymethylbilane + 4 NH4(+)</text>
        <dbReference type="Rhea" id="RHEA:13185"/>
        <dbReference type="ChEBI" id="CHEBI:15377"/>
        <dbReference type="ChEBI" id="CHEBI:28938"/>
        <dbReference type="ChEBI" id="CHEBI:57845"/>
        <dbReference type="ChEBI" id="CHEBI:58126"/>
        <dbReference type="EC" id="2.5.1.61"/>
    </reaction>
</comment>
<comment type="cofactor">
    <cofactor evidence="1">
        <name>dipyrromethane</name>
        <dbReference type="ChEBI" id="CHEBI:60342"/>
    </cofactor>
    <text evidence="1">Binds 1 dipyrromethane group covalently.</text>
</comment>
<comment type="pathway">
    <text evidence="1">Porphyrin-containing compound metabolism; protoporphyrin-IX biosynthesis; coproporphyrinogen-III from 5-aminolevulinate: step 2/4.</text>
</comment>
<comment type="pathway">
    <text evidence="1">Porphyrin-containing compound metabolism; chlorophyll biosynthesis.</text>
</comment>
<comment type="subunit">
    <text evidence="1">Monomer.</text>
</comment>
<comment type="miscellaneous">
    <text evidence="1">The porphobilinogen subunits are added to the dipyrromethane group.</text>
</comment>
<comment type="similarity">
    <text evidence="1">Belongs to the HMBS family.</text>
</comment>
<accession>A2C7L8</accession>
<protein>
    <recommendedName>
        <fullName evidence="1">Porphobilinogen deaminase</fullName>
        <shortName evidence="1">PBG</shortName>
        <ecNumber evidence="1">2.5.1.61</ecNumber>
    </recommendedName>
    <alternativeName>
        <fullName evidence="1">Hydroxymethylbilane synthase</fullName>
        <shortName evidence="1">HMBS</shortName>
    </alternativeName>
    <alternativeName>
        <fullName evidence="1">Pre-uroporphyrinogen synthase</fullName>
    </alternativeName>
</protein>
<organism>
    <name type="scientific">Prochlorococcus marinus (strain MIT 9303)</name>
    <dbReference type="NCBI Taxonomy" id="59922"/>
    <lineage>
        <taxon>Bacteria</taxon>
        <taxon>Bacillati</taxon>
        <taxon>Cyanobacteriota</taxon>
        <taxon>Cyanophyceae</taxon>
        <taxon>Synechococcales</taxon>
        <taxon>Prochlorococcaceae</taxon>
        <taxon>Prochlorococcus</taxon>
    </lineage>
</organism>
<feature type="chain" id="PRO_0000304260" description="Porphobilinogen deaminase">
    <location>
        <begin position="1"/>
        <end position="317"/>
    </location>
</feature>
<feature type="modified residue" description="S-(dipyrrolylmethanemethyl)cysteine" evidence="1">
    <location>
        <position position="245"/>
    </location>
</feature>
<dbReference type="EC" id="2.5.1.61" evidence="1"/>
<dbReference type="EMBL" id="CP000554">
    <property type="protein sequence ID" value="ABM77478.1"/>
    <property type="molecule type" value="Genomic_DNA"/>
</dbReference>
<dbReference type="RefSeq" id="WP_011825392.1">
    <property type="nucleotide sequence ID" value="NC_008820.1"/>
</dbReference>
<dbReference type="SMR" id="A2C7L8"/>
<dbReference type="STRING" id="59922.P9303_07271"/>
<dbReference type="KEGG" id="pmf:P9303_07271"/>
<dbReference type="HOGENOM" id="CLU_019704_0_2_3"/>
<dbReference type="BioCyc" id="PMAR59922:G1G80-664-MONOMER"/>
<dbReference type="UniPathway" id="UPA00251">
    <property type="reaction ID" value="UER00319"/>
</dbReference>
<dbReference type="UniPathway" id="UPA00668"/>
<dbReference type="Proteomes" id="UP000002274">
    <property type="component" value="Chromosome"/>
</dbReference>
<dbReference type="GO" id="GO:0005737">
    <property type="term" value="C:cytoplasm"/>
    <property type="evidence" value="ECO:0007669"/>
    <property type="project" value="TreeGrafter"/>
</dbReference>
<dbReference type="GO" id="GO:0004418">
    <property type="term" value="F:hydroxymethylbilane synthase activity"/>
    <property type="evidence" value="ECO:0007669"/>
    <property type="project" value="UniProtKB-UniRule"/>
</dbReference>
<dbReference type="GO" id="GO:0015995">
    <property type="term" value="P:chlorophyll biosynthetic process"/>
    <property type="evidence" value="ECO:0007669"/>
    <property type="project" value="UniProtKB-UniRule"/>
</dbReference>
<dbReference type="GO" id="GO:0006782">
    <property type="term" value="P:protoporphyrinogen IX biosynthetic process"/>
    <property type="evidence" value="ECO:0007669"/>
    <property type="project" value="UniProtKB-UniRule"/>
</dbReference>
<dbReference type="CDD" id="cd13645">
    <property type="entry name" value="PBP2_HuPBGD_like"/>
    <property type="match status" value="1"/>
</dbReference>
<dbReference type="FunFam" id="3.30.160.40:FF:000002">
    <property type="entry name" value="Porphobilinogen deaminase"/>
    <property type="match status" value="1"/>
</dbReference>
<dbReference type="FunFam" id="3.40.190.10:FF:000004">
    <property type="entry name" value="Porphobilinogen deaminase"/>
    <property type="match status" value="1"/>
</dbReference>
<dbReference type="FunFam" id="3.40.190.10:FF:000005">
    <property type="entry name" value="Porphobilinogen deaminase"/>
    <property type="match status" value="1"/>
</dbReference>
<dbReference type="Gene3D" id="3.40.190.10">
    <property type="entry name" value="Periplasmic binding protein-like II"/>
    <property type="match status" value="2"/>
</dbReference>
<dbReference type="Gene3D" id="3.30.160.40">
    <property type="entry name" value="Porphobilinogen deaminase, C-terminal domain"/>
    <property type="match status" value="1"/>
</dbReference>
<dbReference type="HAMAP" id="MF_00260">
    <property type="entry name" value="Porphobil_deam"/>
    <property type="match status" value="1"/>
</dbReference>
<dbReference type="InterPro" id="IPR000860">
    <property type="entry name" value="HemC"/>
</dbReference>
<dbReference type="InterPro" id="IPR022419">
    <property type="entry name" value="Porphobilin_deaminase_cofac_BS"/>
</dbReference>
<dbReference type="InterPro" id="IPR022417">
    <property type="entry name" value="Porphobilin_deaminase_N"/>
</dbReference>
<dbReference type="InterPro" id="IPR022418">
    <property type="entry name" value="Porphobilinogen_deaminase_C"/>
</dbReference>
<dbReference type="InterPro" id="IPR036803">
    <property type="entry name" value="Porphobilinogen_deaminase_C_sf"/>
</dbReference>
<dbReference type="NCBIfam" id="TIGR00212">
    <property type="entry name" value="hemC"/>
    <property type="match status" value="1"/>
</dbReference>
<dbReference type="PANTHER" id="PTHR11557">
    <property type="entry name" value="PORPHOBILINOGEN DEAMINASE"/>
    <property type="match status" value="1"/>
</dbReference>
<dbReference type="PANTHER" id="PTHR11557:SF0">
    <property type="entry name" value="PORPHOBILINOGEN DEAMINASE"/>
    <property type="match status" value="1"/>
</dbReference>
<dbReference type="Pfam" id="PF01379">
    <property type="entry name" value="Porphobil_deam"/>
    <property type="match status" value="1"/>
</dbReference>
<dbReference type="Pfam" id="PF03900">
    <property type="entry name" value="Porphobil_deamC"/>
    <property type="match status" value="1"/>
</dbReference>
<dbReference type="PIRSF" id="PIRSF001438">
    <property type="entry name" value="4pyrrol_synth_OHMeBilane_synth"/>
    <property type="match status" value="1"/>
</dbReference>
<dbReference type="PRINTS" id="PR00151">
    <property type="entry name" value="PORPHBDMNASE"/>
</dbReference>
<dbReference type="SUPFAM" id="SSF53850">
    <property type="entry name" value="Periplasmic binding protein-like II"/>
    <property type="match status" value="1"/>
</dbReference>
<dbReference type="SUPFAM" id="SSF54782">
    <property type="entry name" value="Porphobilinogen deaminase (hydroxymethylbilane synthase), C-terminal domain"/>
    <property type="match status" value="1"/>
</dbReference>
<dbReference type="PROSITE" id="PS00533">
    <property type="entry name" value="PORPHOBILINOGEN_DEAM"/>
    <property type="match status" value="1"/>
</dbReference>
<gene>
    <name evidence="1" type="primary">hemC</name>
    <name type="ordered locus">P9303_07271</name>
</gene>
<sequence length="317" mass="34379">MVLTQLRIASRRSQLAMVQTNWVQAELEQAHPGLSISVEAMATQGDKILDVALAKIGDKGLFTKELEAQMLIGRADIAVHSLKDLPTNLPEGLMLGCVTEREDPADALVVNQKNAEHQLDTLPEGAIVGTSSLRRLAQLRHHYPHLVFKDVRGNVITRLEKLDAGNYDCLILAAAGLTRLGFGDRIHQLIPSEISLHAVGQGALGIECVEGHPEVLEVIKALEHKPTAQRCLAERALLRELEGGCQVPIGVNSRIEANELLLTGMVASLDGKRLIRDQQRGPIDRCEAIGKELAETLKSQGAGEILAEIFAAVRPEA</sequence>
<name>HEM3_PROM3</name>
<reference key="1">
    <citation type="journal article" date="2007" name="PLoS Genet.">
        <title>Patterns and implications of gene gain and loss in the evolution of Prochlorococcus.</title>
        <authorList>
            <person name="Kettler G.C."/>
            <person name="Martiny A.C."/>
            <person name="Huang K."/>
            <person name="Zucker J."/>
            <person name="Coleman M.L."/>
            <person name="Rodrigue S."/>
            <person name="Chen F."/>
            <person name="Lapidus A."/>
            <person name="Ferriera S."/>
            <person name="Johnson J."/>
            <person name="Steglich C."/>
            <person name="Church G.M."/>
            <person name="Richardson P."/>
            <person name="Chisholm S.W."/>
        </authorList>
    </citation>
    <scope>NUCLEOTIDE SEQUENCE [LARGE SCALE GENOMIC DNA]</scope>
    <source>
        <strain>MIT 9303</strain>
    </source>
</reference>
<evidence type="ECO:0000255" key="1">
    <source>
        <dbReference type="HAMAP-Rule" id="MF_00260"/>
    </source>
</evidence>